<reference key="1">
    <citation type="journal article" date="2000" name="Nature">
        <title>Sequence and analysis of chromosome 3 of the plant Arabidopsis thaliana.</title>
        <authorList>
            <person name="Salanoubat M."/>
            <person name="Lemcke K."/>
            <person name="Rieger M."/>
            <person name="Ansorge W."/>
            <person name="Unseld M."/>
            <person name="Fartmann B."/>
            <person name="Valle G."/>
            <person name="Bloecker H."/>
            <person name="Perez-Alonso M."/>
            <person name="Obermaier B."/>
            <person name="Delseny M."/>
            <person name="Boutry M."/>
            <person name="Grivell L.A."/>
            <person name="Mache R."/>
            <person name="Puigdomenech P."/>
            <person name="De Simone V."/>
            <person name="Choisne N."/>
            <person name="Artiguenave F."/>
            <person name="Robert C."/>
            <person name="Brottier P."/>
            <person name="Wincker P."/>
            <person name="Cattolico L."/>
            <person name="Weissenbach J."/>
            <person name="Saurin W."/>
            <person name="Quetier F."/>
            <person name="Schaefer M."/>
            <person name="Mueller-Auer S."/>
            <person name="Gabel C."/>
            <person name="Fuchs M."/>
            <person name="Benes V."/>
            <person name="Wurmbach E."/>
            <person name="Drzonek H."/>
            <person name="Erfle H."/>
            <person name="Jordan N."/>
            <person name="Bangert S."/>
            <person name="Wiedelmann R."/>
            <person name="Kranz H."/>
            <person name="Voss H."/>
            <person name="Holland R."/>
            <person name="Brandt P."/>
            <person name="Nyakatura G."/>
            <person name="Vezzi A."/>
            <person name="D'Angelo M."/>
            <person name="Pallavicini A."/>
            <person name="Toppo S."/>
            <person name="Simionati B."/>
            <person name="Conrad A."/>
            <person name="Hornischer K."/>
            <person name="Kauer G."/>
            <person name="Loehnert T.-H."/>
            <person name="Nordsiek G."/>
            <person name="Reichelt J."/>
            <person name="Scharfe M."/>
            <person name="Schoen O."/>
            <person name="Bargues M."/>
            <person name="Terol J."/>
            <person name="Climent J."/>
            <person name="Navarro P."/>
            <person name="Collado C."/>
            <person name="Perez-Perez A."/>
            <person name="Ottenwaelder B."/>
            <person name="Duchemin D."/>
            <person name="Cooke R."/>
            <person name="Laudie M."/>
            <person name="Berger-Llauro C."/>
            <person name="Purnelle B."/>
            <person name="Masuy D."/>
            <person name="de Haan M."/>
            <person name="Maarse A.C."/>
            <person name="Alcaraz J.-P."/>
            <person name="Cottet A."/>
            <person name="Casacuberta E."/>
            <person name="Monfort A."/>
            <person name="Argiriou A."/>
            <person name="Flores M."/>
            <person name="Liguori R."/>
            <person name="Vitale D."/>
            <person name="Mannhaupt G."/>
            <person name="Haase D."/>
            <person name="Schoof H."/>
            <person name="Rudd S."/>
            <person name="Zaccaria P."/>
            <person name="Mewes H.-W."/>
            <person name="Mayer K.F.X."/>
            <person name="Kaul S."/>
            <person name="Town C.D."/>
            <person name="Koo H.L."/>
            <person name="Tallon L.J."/>
            <person name="Jenkins J."/>
            <person name="Rooney T."/>
            <person name="Rizzo M."/>
            <person name="Walts A."/>
            <person name="Utterback T."/>
            <person name="Fujii C.Y."/>
            <person name="Shea T.P."/>
            <person name="Creasy T.H."/>
            <person name="Haas B."/>
            <person name="Maiti R."/>
            <person name="Wu D."/>
            <person name="Peterson J."/>
            <person name="Van Aken S."/>
            <person name="Pai G."/>
            <person name="Militscher J."/>
            <person name="Sellers P."/>
            <person name="Gill J.E."/>
            <person name="Feldblyum T.V."/>
            <person name="Preuss D."/>
            <person name="Lin X."/>
            <person name="Nierman W.C."/>
            <person name="Salzberg S.L."/>
            <person name="White O."/>
            <person name="Venter J.C."/>
            <person name="Fraser C.M."/>
            <person name="Kaneko T."/>
            <person name="Nakamura Y."/>
            <person name="Sato S."/>
            <person name="Kato T."/>
            <person name="Asamizu E."/>
            <person name="Sasamoto S."/>
            <person name="Kimura T."/>
            <person name="Idesawa K."/>
            <person name="Kawashima K."/>
            <person name="Kishida Y."/>
            <person name="Kiyokawa C."/>
            <person name="Kohara M."/>
            <person name="Matsumoto M."/>
            <person name="Matsuno A."/>
            <person name="Muraki A."/>
            <person name="Nakayama S."/>
            <person name="Nakazaki N."/>
            <person name="Shinpo S."/>
            <person name="Takeuchi C."/>
            <person name="Wada T."/>
            <person name="Watanabe A."/>
            <person name="Yamada M."/>
            <person name="Yasuda M."/>
            <person name="Tabata S."/>
        </authorList>
    </citation>
    <scope>NUCLEOTIDE SEQUENCE [LARGE SCALE GENOMIC DNA]</scope>
    <source>
        <strain>cv. Columbia</strain>
    </source>
</reference>
<reference key="2">
    <citation type="journal article" date="2017" name="Plant J.">
        <title>Araport11: a complete reannotation of the Arabidopsis thaliana reference genome.</title>
        <authorList>
            <person name="Cheng C.Y."/>
            <person name="Krishnakumar V."/>
            <person name="Chan A.P."/>
            <person name="Thibaud-Nissen F."/>
            <person name="Schobel S."/>
            <person name="Town C.D."/>
        </authorList>
    </citation>
    <scope>GENOME REANNOTATION</scope>
    <source>
        <strain>cv. Columbia</strain>
    </source>
</reference>
<reference key="3">
    <citation type="journal article" date="2003" name="Science">
        <title>Empirical analysis of transcriptional activity in the Arabidopsis genome.</title>
        <authorList>
            <person name="Yamada K."/>
            <person name="Lim J."/>
            <person name="Dale J.M."/>
            <person name="Chen H."/>
            <person name="Shinn P."/>
            <person name="Palm C.J."/>
            <person name="Southwick A.M."/>
            <person name="Wu H.C."/>
            <person name="Kim C.J."/>
            <person name="Nguyen M."/>
            <person name="Pham P.K."/>
            <person name="Cheuk R.F."/>
            <person name="Karlin-Newmann G."/>
            <person name="Liu S.X."/>
            <person name="Lam B."/>
            <person name="Sakano H."/>
            <person name="Wu T."/>
            <person name="Yu G."/>
            <person name="Miranda M."/>
            <person name="Quach H.L."/>
            <person name="Tripp M."/>
            <person name="Chang C.H."/>
            <person name="Lee J.M."/>
            <person name="Toriumi M.J."/>
            <person name="Chan M.M."/>
            <person name="Tang C.C."/>
            <person name="Onodera C.S."/>
            <person name="Deng J.M."/>
            <person name="Akiyama K."/>
            <person name="Ansari Y."/>
            <person name="Arakawa T."/>
            <person name="Banh J."/>
            <person name="Banno F."/>
            <person name="Bowser L."/>
            <person name="Brooks S.Y."/>
            <person name="Carninci P."/>
            <person name="Chao Q."/>
            <person name="Choy N."/>
            <person name="Enju A."/>
            <person name="Goldsmith A.D."/>
            <person name="Gurjal M."/>
            <person name="Hansen N.F."/>
            <person name="Hayashizaki Y."/>
            <person name="Johnson-Hopson C."/>
            <person name="Hsuan V.W."/>
            <person name="Iida K."/>
            <person name="Karnes M."/>
            <person name="Khan S."/>
            <person name="Koesema E."/>
            <person name="Ishida J."/>
            <person name="Jiang P.X."/>
            <person name="Jones T."/>
            <person name="Kawai J."/>
            <person name="Kamiya A."/>
            <person name="Meyers C."/>
            <person name="Nakajima M."/>
            <person name="Narusaka M."/>
            <person name="Seki M."/>
            <person name="Sakurai T."/>
            <person name="Satou M."/>
            <person name="Tamse R."/>
            <person name="Vaysberg M."/>
            <person name="Wallender E.K."/>
            <person name="Wong C."/>
            <person name="Yamamura Y."/>
            <person name="Yuan S."/>
            <person name="Shinozaki K."/>
            <person name="Davis R.W."/>
            <person name="Theologis A."/>
            <person name="Ecker J.R."/>
        </authorList>
    </citation>
    <scope>NUCLEOTIDE SEQUENCE [LARGE SCALE MRNA]</scope>
    <source>
        <strain>cv. Columbia</strain>
    </source>
</reference>
<reference key="4">
    <citation type="submission" date="2006-07" db="EMBL/GenBank/DDBJ databases">
        <title>Large-scale analysis of RIKEN Arabidopsis full-length (RAFL) cDNAs.</title>
        <authorList>
            <person name="Totoki Y."/>
            <person name="Seki M."/>
            <person name="Ishida J."/>
            <person name="Nakajima M."/>
            <person name="Enju A."/>
            <person name="Kamiya A."/>
            <person name="Narusaka M."/>
            <person name="Shin-i T."/>
            <person name="Nakagawa M."/>
            <person name="Sakamoto N."/>
            <person name="Oishi K."/>
            <person name="Kohara Y."/>
            <person name="Kobayashi M."/>
            <person name="Toyoda A."/>
            <person name="Sakaki Y."/>
            <person name="Sakurai T."/>
            <person name="Iida K."/>
            <person name="Akiyama K."/>
            <person name="Satou M."/>
            <person name="Toyoda T."/>
            <person name="Konagaya A."/>
            <person name="Carninci P."/>
            <person name="Kawai J."/>
            <person name="Hayashizaki Y."/>
            <person name="Shinozaki K."/>
        </authorList>
    </citation>
    <scope>NUCLEOTIDE SEQUENCE [LARGE SCALE MRNA]</scope>
    <source>
        <strain>cv. Columbia</strain>
    </source>
</reference>
<reference key="5">
    <citation type="journal article" date="2018" name="Front. Plant Sci.">
        <title>Arabidopsis Kunitz trypsin inhibitors in defense against spider mites.</title>
        <authorList>
            <person name="Arnaiz A."/>
            <person name="Talavera-Mateo L."/>
            <person name="Gonzalez-Melendi P."/>
            <person name="Martinez M."/>
            <person name="Diaz I."/>
            <person name="Santamaria M.E."/>
        </authorList>
    </citation>
    <scope>GENE FAMILY</scope>
    <scope>NOMENCLATURE</scope>
</reference>
<keyword id="KW-1015">Disulfide bond</keyword>
<keyword id="KW-0325">Glycoprotein</keyword>
<keyword id="KW-0646">Protease inhibitor</keyword>
<keyword id="KW-1185">Reference proteome</keyword>
<keyword id="KW-0722">Serine protease inhibitor</keyword>
<keyword id="KW-0732">Signal</keyword>
<comment type="function">
    <text evidence="2">Exhibits Kunitz trypsin protease inhibitor activity.</text>
</comment>
<comment type="similarity">
    <text evidence="6">Belongs to the protease inhibitor I3 (leguminous Kunitz-type inhibitor) family.</text>
</comment>
<comment type="sequence caution" evidence="6">
    <conflict type="erroneous initiation">
        <sequence resource="EMBL-CDS" id="AAF26782"/>
    </conflict>
    <text>Extended N-terminus.</text>
</comment>
<comment type="sequence caution" evidence="6">
    <conflict type="erroneous initiation">
        <sequence resource="EMBL-CDS" id="AAP40451"/>
    </conflict>
    <text>Extended N-terminus.</text>
</comment>
<comment type="sequence caution" evidence="6">
    <conflict type="erroneous initiation">
        <sequence resource="EMBL-CDS" id="ANM65063"/>
    </conflict>
    <text>Extended N-terminus.</text>
</comment>
<name>KTI6_ARATH</name>
<sequence>MKTFQLMMISFLFVAITTTSGVVSEGNDVVYDGEGDPVKPNVPYYISFMTSDYNMWICRMQYGSTDPNSCPQQPLMVTHPNLAAPTPVMFVLANKSDVVRESAKLKIKFVGPRQCGKSGFWKVVQRNSSEGEVFLNGSKSMSHNDSTFAIHKTNEYYKFTFGDGDYPTTISMTNDYPIYRLLSKRLSGEMEIYFYKNLTTSEG</sequence>
<evidence type="ECO:0000250" key="1">
    <source>
        <dbReference type="UniProtKB" id="P01070"/>
    </source>
</evidence>
<evidence type="ECO:0000250" key="2">
    <source>
        <dbReference type="UniProtKB" id="Q8RXD5"/>
    </source>
</evidence>
<evidence type="ECO:0000255" key="3"/>
<evidence type="ECO:0000255" key="4">
    <source>
        <dbReference type="PROSITE-ProRule" id="PRU00498"/>
    </source>
</evidence>
<evidence type="ECO:0000303" key="5">
    <source>
    </source>
</evidence>
<evidence type="ECO:0000305" key="6"/>
<evidence type="ECO:0000312" key="7">
    <source>
        <dbReference type="Araport" id="AT3G04320"/>
    </source>
</evidence>
<evidence type="ECO:0000312" key="8">
    <source>
        <dbReference type="EMBL" id="AAF26782.1"/>
    </source>
</evidence>
<organism>
    <name type="scientific">Arabidopsis thaliana</name>
    <name type="common">Mouse-ear cress</name>
    <dbReference type="NCBI Taxonomy" id="3702"/>
    <lineage>
        <taxon>Eukaryota</taxon>
        <taxon>Viridiplantae</taxon>
        <taxon>Streptophyta</taxon>
        <taxon>Embryophyta</taxon>
        <taxon>Tracheophyta</taxon>
        <taxon>Spermatophyta</taxon>
        <taxon>Magnoliopsida</taxon>
        <taxon>eudicotyledons</taxon>
        <taxon>Gunneridae</taxon>
        <taxon>Pentapetalae</taxon>
        <taxon>rosids</taxon>
        <taxon>malvids</taxon>
        <taxon>Brassicales</taxon>
        <taxon>Brassicaceae</taxon>
        <taxon>Camelineae</taxon>
        <taxon>Arabidopsis</taxon>
    </lineage>
</organism>
<feature type="signal peptide" evidence="3">
    <location>
        <begin position="1"/>
        <end position="21"/>
    </location>
</feature>
<feature type="chain" id="PRO_5015097008" description="Kunitz trypsin inhibitor 6">
    <location>
        <begin position="22"/>
        <end position="203"/>
    </location>
</feature>
<feature type="glycosylation site" description="N-linked (GlcNAc...) asparagine" evidence="4">
    <location>
        <position position="94"/>
    </location>
</feature>
<feature type="glycosylation site" description="N-linked (GlcNAc...) asparagine" evidence="4">
    <location>
        <position position="127"/>
    </location>
</feature>
<feature type="glycosylation site" description="N-linked (GlcNAc...) asparagine" evidence="4">
    <location>
        <position position="136"/>
    </location>
</feature>
<feature type="glycosylation site" description="N-linked (GlcNAc...) asparagine" evidence="4">
    <location>
        <position position="144"/>
    </location>
</feature>
<feature type="glycosylation site" description="N-linked (GlcNAc...) asparagine" evidence="4">
    <location>
        <position position="197"/>
    </location>
</feature>
<feature type="disulfide bond" evidence="1">
    <location>
        <begin position="70"/>
        <end position="115"/>
    </location>
</feature>
<protein>
    <recommendedName>
        <fullName evidence="5">Kunitz trypsin inhibitor 6</fullName>
        <shortName evidence="5">AtKTI6</shortName>
    </recommendedName>
</protein>
<gene>
    <name evidence="5" type="primary">KTI6</name>
    <name evidence="7" type="ordered locus">At3g04320</name>
    <name evidence="8" type="ORF">T6K12.6</name>
</gene>
<dbReference type="EMBL" id="AC016829">
    <property type="protein sequence ID" value="AAF26782.1"/>
    <property type="status" value="ALT_INIT"/>
    <property type="molecule type" value="Genomic_DNA"/>
</dbReference>
<dbReference type="EMBL" id="CP002686">
    <property type="protein sequence ID" value="AEE74066.1"/>
    <property type="molecule type" value="Genomic_DNA"/>
</dbReference>
<dbReference type="EMBL" id="CP002686">
    <property type="protein sequence ID" value="ANM65063.1"/>
    <property type="status" value="ALT_INIT"/>
    <property type="molecule type" value="Genomic_DNA"/>
</dbReference>
<dbReference type="EMBL" id="BT008630">
    <property type="protein sequence ID" value="AAP40451.1"/>
    <property type="status" value="ALT_INIT"/>
    <property type="molecule type" value="mRNA"/>
</dbReference>
<dbReference type="EMBL" id="AK229498">
    <property type="protein sequence ID" value="BAF01355.1"/>
    <property type="molecule type" value="mRNA"/>
</dbReference>
<dbReference type="RefSeq" id="NP_001327060.1">
    <property type="nucleotide sequence ID" value="NM_001337512.1"/>
</dbReference>
<dbReference type="RefSeq" id="NP_187082.2">
    <property type="nucleotide sequence ID" value="NM_111303.6"/>
</dbReference>
<dbReference type="SMR" id="Q0WNE5"/>
<dbReference type="STRING" id="3702.Q0WNE5"/>
<dbReference type="MEROPS" id="I03.017"/>
<dbReference type="GlyCosmos" id="Q0WNE5">
    <property type="glycosylation" value="5 sites, No reported glycans"/>
</dbReference>
<dbReference type="GlyGen" id="Q0WNE5">
    <property type="glycosylation" value="5 sites"/>
</dbReference>
<dbReference type="PaxDb" id="3702-AT3G04320.1"/>
<dbReference type="ProteomicsDB" id="177106"/>
<dbReference type="ProteomicsDB" id="216404"/>
<dbReference type="EnsemblPlants" id="AT3G04320.1">
    <property type="protein sequence ID" value="AT3G04320.1"/>
    <property type="gene ID" value="AT3G04320"/>
</dbReference>
<dbReference type="GeneID" id="819587"/>
<dbReference type="Gramene" id="AT3G04320.1">
    <property type="protein sequence ID" value="AT3G04320.1"/>
    <property type="gene ID" value="AT3G04320"/>
</dbReference>
<dbReference type="KEGG" id="ath:AT3G04320"/>
<dbReference type="Araport" id="AT3G04320"/>
<dbReference type="TAIR" id="AT3G04320"/>
<dbReference type="HOGENOM" id="CLU_1350546_0_0_1"/>
<dbReference type="InParanoid" id="Q0WNE5"/>
<dbReference type="PRO" id="PR:Q0WNE5"/>
<dbReference type="Proteomes" id="UP000006548">
    <property type="component" value="Chromosome 3"/>
</dbReference>
<dbReference type="ExpressionAtlas" id="Q0WNE5">
    <property type="expression patterns" value="baseline and differential"/>
</dbReference>
<dbReference type="GO" id="GO:0004867">
    <property type="term" value="F:serine-type endopeptidase inhibitor activity"/>
    <property type="evidence" value="ECO:0007669"/>
    <property type="project" value="UniProtKB-KW"/>
</dbReference>
<dbReference type="CDD" id="cd23369">
    <property type="entry name" value="beta-trefoil_STI_AtKTI6-like"/>
    <property type="match status" value="1"/>
</dbReference>
<dbReference type="Gene3D" id="2.80.10.50">
    <property type="match status" value="1"/>
</dbReference>
<dbReference type="InterPro" id="IPR011065">
    <property type="entry name" value="Kunitz_inhibitor_STI-like_sf"/>
</dbReference>
<dbReference type="InterPro" id="IPR002160">
    <property type="entry name" value="Prot_inh_Kunz-lg"/>
</dbReference>
<dbReference type="PANTHER" id="PTHR33107">
    <property type="entry name" value="KUNITZ TRYPSIN INHIBITOR 2"/>
    <property type="match status" value="1"/>
</dbReference>
<dbReference type="PANTHER" id="PTHR33107:SF35">
    <property type="entry name" value="KUNITZ TRYPSIN INHIBITOR 6-RELATED"/>
    <property type="match status" value="1"/>
</dbReference>
<dbReference type="Pfam" id="PF00197">
    <property type="entry name" value="Kunitz_legume"/>
    <property type="match status" value="1"/>
</dbReference>
<dbReference type="SMART" id="SM00452">
    <property type="entry name" value="STI"/>
    <property type="match status" value="1"/>
</dbReference>
<dbReference type="SUPFAM" id="SSF50386">
    <property type="entry name" value="STI-like"/>
    <property type="match status" value="1"/>
</dbReference>
<dbReference type="PROSITE" id="PS00283">
    <property type="entry name" value="SOYBEAN_KUNITZ"/>
    <property type="match status" value="1"/>
</dbReference>
<proteinExistence type="evidence at transcript level"/>
<accession>Q0WNE5</accession>
<accession>A0A178VKP9</accession>
<accession>A0A1I9LR55</accession>
<accession>Q7Y212</accession>
<accession>Q9M8Y8</accession>